<feature type="chain" id="PRO_1000097879" description="Arginine repressor">
    <location>
        <begin position="1"/>
        <end position="156"/>
    </location>
</feature>
<organism>
    <name type="scientific">Proteus mirabilis (strain HI4320)</name>
    <dbReference type="NCBI Taxonomy" id="529507"/>
    <lineage>
        <taxon>Bacteria</taxon>
        <taxon>Pseudomonadati</taxon>
        <taxon>Pseudomonadota</taxon>
        <taxon>Gammaproteobacteria</taxon>
        <taxon>Enterobacterales</taxon>
        <taxon>Morganellaceae</taxon>
        <taxon>Proteus</taxon>
    </lineage>
</organism>
<protein>
    <recommendedName>
        <fullName evidence="1">Arginine repressor</fullName>
    </recommendedName>
</protein>
<keyword id="KW-0028">Amino-acid biosynthesis</keyword>
<keyword id="KW-0055">Arginine biosynthesis</keyword>
<keyword id="KW-0963">Cytoplasm</keyword>
<keyword id="KW-0238">DNA-binding</keyword>
<keyword id="KW-1185">Reference proteome</keyword>
<keyword id="KW-0678">Repressor</keyword>
<keyword id="KW-0804">Transcription</keyword>
<keyword id="KW-0805">Transcription regulation</keyword>
<reference key="1">
    <citation type="journal article" date="2008" name="J. Bacteriol.">
        <title>Complete genome sequence of uropathogenic Proteus mirabilis, a master of both adherence and motility.</title>
        <authorList>
            <person name="Pearson M.M."/>
            <person name="Sebaihia M."/>
            <person name="Churcher C."/>
            <person name="Quail M.A."/>
            <person name="Seshasayee A.S."/>
            <person name="Luscombe N.M."/>
            <person name="Abdellah Z."/>
            <person name="Arrosmith C."/>
            <person name="Atkin B."/>
            <person name="Chillingworth T."/>
            <person name="Hauser H."/>
            <person name="Jagels K."/>
            <person name="Moule S."/>
            <person name="Mungall K."/>
            <person name="Norbertczak H."/>
            <person name="Rabbinowitsch E."/>
            <person name="Walker D."/>
            <person name="Whithead S."/>
            <person name="Thomson N.R."/>
            <person name="Rather P.N."/>
            <person name="Parkhill J."/>
            <person name="Mobley H.L.T."/>
        </authorList>
    </citation>
    <scope>NUCLEOTIDE SEQUENCE [LARGE SCALE GENOMIC DNA]</scope>
    <source>
        <strain>HI4320</strain>
    </source>
</reference>
<dbReference type="EMBL" id="AM942759">
    <property type="protein sequence ID" value="CAR46661.1"/>
    <property type="molecule type" value="Genomic_DNA"/>
</dbReference>
<dbReference type="RefSeq" id="WP_004246257.1">
    <property type="nucleotide sequence ID" value="NC_010554.1"/>
</dbReference>
<dbReference type="SMR" id="B4F2A0"/>
<dbReference type="EnsemblBacteria" id="CAR46661">
    <property type="protein sequence ID" value="CAR46661"/>
    <property type="gene ID" value="PMI3399"/>
</dbReference>
<dbReference type="GeneID" id="6802638"/>
<dbReference type="KEGG" id="pmr:PMI3399"/>
<dbReference type="eggNOG" id="COG1438">
    <property type="taxonomic scope" value="Bacteria"/>
</dbReference>
<dbReference type="HOGENOM" id="CLU_097103_2_0_6"/>
<dbReference type="UniPathway" id="UPA00068"/>
<dbReference type="Proteomes" id="UP000008319">
    <property type="component" value="Chromosome"/>
</dbReference>
<dbReference type="GO" id="GO:0005737">
    <property type="term" value="C:cytoplasm"/>
    <property type="evidence" value="ECO:0007669"/>
    <property type="project" value="UniProtKB-SubCell"/>
</dbReference>
<dbReference type="GO" id="GO:0034618">
    <property type="term" value="F:arginine binding"/>
    <property type="evidence" value="ECO:0007669"/>
    <property type="project" value="InterPro"/>
</dbReference>
<dbReference type="GO" id="GO:0003677">
    <property type="term" value="F:DNA binding"/>
    <property type="evidence" value="ECO:0007669"/>
    <property type="project" value="UniProtKB-KW"/>
</dbReference>
<dbReference type="GO" id="GO:0003700">
    <property type="term" value="F:DNA-binding transcription factor activity"/>
    <property type="evidence" value="ECO:0007669"/>
    <property type="project" value="UniProtKB-UniRule"/>
</dbReference>
<dbReference type="GO" id="GO:0006526">
    <property type="term" value="P:L-arginine biosynthetic process"/>
    <property type="evidence" value="ECO:0007669"/>
    <property type="project" value="UniProtKB-UniPathway"/>
</dbReference>
<dbReference type="GO" id="GO:0051259">
    <property type="term" value="P:protein complex oligomerization"/>
    <property type="evidence" value="ECO:0007669"/>
    <property type="project" value="InterPro"/>
</dbReference>
<dbReference type="GO" id="GO:1900079">
    <property type="term" value="P:regulation of arginine biosynthetic process"/>
    <property type="evidence" value="ECO:0007669"/>
    <property type="project" value="UniProtKB-UniRule"/>
</dbReference>
<dbReference type="Gene3D" id="3.30.1360.40">
    <property type="match status" value="1"/>
</dbReference>
<dbReference type="Gene3D" id="1.10.10.10">
    <property type="entry name" value="Winged helix-like DNA-binding domain superfamily/Winged helix DNA-binding domain"/>
    <property type="match status" value="1"/>
</dbReference>
<dbReference type="HAMAP" id="MF_00173">
    <property type="entry name" value="Arg_repressor"/>
    <property type="match status" value="1"/>
</dbReference>
<dbReference type="InterPro" id="IPR001669">
    <property type="entry name" value="Arg_repress"/>
</dbReference>
<dbReference type="InterPro" id="IPR020899">
    <property type="entry name" value="Arg_repress_C"/>
</dbReference>
<dbReference type="InterPro" id="IPR036251">
    <property type="entry name" value="Arg_repress_C_sf"/>
</dbReference>
<dbReference type="InterPro" id="IPR020900">
    <property type="entry name" value="Arg_repress_DNA-bd"/>
</dbReference>
<dbReference type="InterPro" id="IPR036388">
    <property type="entry name" value="WH-like_DNA-bd_sf"/>
</dbReference>
<dbReference type="InterPro" id="IPR036390">
    <property type="entry name" value="WH_DNA-bd_sf"/>
</dbReference>
<dbReference type="NCBIfam" id="TIGR01529">
    <property type="entry name" value="argR_whole"/>
    <property type="match status" value="1"/>
</dbReference>
<dbReference type="NCBIfam" id="NF003457">
    <property type="entry name" value="PRK05066.1"/>
    <property type="match status" value="1"/>
</dbReference>
<dbReference type="PANTHER" id="PTHR34471">
    <property type="entry name" value="ARGININE REPRESSOR"/>
    <property type="match status" value="1"/>
</dbReference>
<dbReference type="PANTHER" id="PTHR34471:SF1">
    <property type="entry name" value="ARGININE REPRESSOR"/>
    <property type="match status" value="1"/>
</dbReference>
<dbReference type="Pfam" id="PF01316">
    <property type="entry name" value="Arg_repressor"/>
    <property type="match status" value="1"/>
</dbReference>
<dbReference type="Pfam" id="PF02863">
    <property type="entry name" value="Arg_repressor_C"/>
    <property type="match status" value="1"/>
</dbReference>
<dbReference type="PRINTS" id="PR01467">
    <property type="entry name" value="ARGREPRESSOR"/>
</dbReference>
<dbReference type="SUPFAM" id="SSF55252">
    <property type="entry name" value="C-terminal domain of arginine repressor"/>
    <property type="match status" value="1"/>
</dbReference>
<dbReference type="SUPFAM" id="SSF46785">
    <property type="entry name" value="Winged helix' DNA-binding domain"/>
    <property type="match status" value="1"/>
</dbReference>
<accession>B4F2A0</accession>
<sequence length="156" mass="16960">MRTPSKQEDLVKAFKALLKEEKFSSQGEIVTALQEAGFDNINQSKISRMLTKFGAVRTRNAKMEMVYCLPTELGVPTASSPLKNLVLDIDHNHSVVVIRTSPGAAQLIARLLDSLGKAEGILGSIAGDDTIFSTPAPGFSTEELRDAILNLFDQEL</sequence>
<proteinExistence type="inferred from homology"/>
<name>ARGR_PROMH</name>
<comment type="function">
    <text evidence="1">Regulates arginine biosynthesis genes.</text>
</comment>
<comment type="pathway">
    <text>Amino-acid biosynthesis; L-arginine biosynthesis [regulation].</text>
</comment>
<comment type="subcellular location">
    <subcellularLocation>
        <location evidence="1">Cytoplasm</location>
    </subcellularLocation>
</comment>
<comment type="similarity">
    <text evidence="1">Belongs to the ArgR family.</text>
</comment>
<evidence type="ECO:0000255" key="1">
    <source>
        <dbReference type="HAMAP-Rule" id="MF_00173"/>
    </source>
</evidence>
<gene>
    <name evidence="1" type="primary">argR</name>
    <name type="ordered locus">PMI3399</name>
</gene>